<keyword id="KW-0997">Cell inner membrane</keyword>
<keyword id="KW-1003">Cell membrane</keyword>
<keyword id="KW-0342">GTP-binding</keyword>
<keyword id="KW-0378">Hydrolase</keyword>
<keyword id="KW-0472">Membrane</keyword>
<keyword id="KW-0547">Nucleotide-binding</keyword>
<keyword id="KW-0648">Protein biosynthesis</keyword>
<evidence type="ECO:0000255" key="1">
    <source>
        <dbReference type="HAMAP-Rule" id="MF_00071"/>
    </source>
</evidence>
<name>LEPA_XANE5</name>
<comment type="function">
    <text evidence="1">Required for accurate and efficient protein synthesis under certain stress conditions. May act as a fidelity factor of the translation reaction, by catalyzing a one-codon backward translocation of tRNAs on improperly translocated ribosomes. Back-translocation proceeds from a post-translocation (POST) complex to a pre-translocation (PRE) complex, thus giving elongation factor G a second chance to translocate the tRNAs correctly. Binds to ribosomes in a GTP-dependent manner.</text>
</comment>
<comment type="catalytic activity">
    <reaction evidence="1">
        <text>GTP + H2O = GDP + phosphate + H(+)</text>
        <dbReference type="Rhea" id="RHEA:19669"/>
        <dbReference type="ChEBI" id="CHEBI:15377"/>
        <dbReference type="ChEBI" id="CHEBI:15378"/>
        <dbReference type="ChEBI" id="CHEBI:37565"/>
        <dbReference type="ChEBI" id="CHEBI:43474"/>
        <dbReference type="ChEBI" id="CHEBI:58189"/>
        <dbReference type="EC" id="3.6.5.n1"/>
    </reaction>
</comment>
<comment type="subcellular location">
    <subcellularLocation>
        <location evidence="1">Cell inner membrane</location>
        <topology evidence="1">Peripheral membrane protein</topology>
        <orientation evidence="1">Cytoplasmic side</orientation>
    </subcellularLocation>
</comment>
<comment type="similarity">
    <text evidence="1">Belongs to the TRAFAC class translation factor GTPase superfamily. Classic translation factor GTPase family. LepA subfamily.</text>
</comment>
<reference key="1">
    <citation type="journal article" date="2005" name="J. Bacteriol.">
        <title>Insights into genome plasticity and pathogenicity of the plant pathogenic Bacterium Xanthomonas campestris pv. vesicatoria revealed by the complete genome sequence.</title>
        <authorList>
            <person name="Thieme F."/>
            <person name="Koebnik R."/>
            <person name="Bekel T."/>
            <person name="Berger C."/>
            <person name="Boch J."/>
            <person name="Buettner D."/>
            <person name="Caldana C."/>
            <person name="Gaigalat L."/>
            <person name="Goesmann A."/>
            <person name="Kay S."/>
            <person name="Kirchner O."/>
            <person name="Lanz C."/>
            <person name="Linke B."/>
            <person name="McHardy A.C."/>
            <person name="Meyer F."/>
            <person name="Mittenhuber G."/>
            <person name="Nies D.H."/>
            <person name="Niesbach-Kloesgen U."/>
            <person name="Patschkowski T."/>
            <person name="Rueckert C."/>
            <person name="Rupp O."/>
            <person name="Schneiker S."/>
            <person name="Schuster S.C."/>
            <person name="Vorhoelter F.J."/>
            <person name="Weber E."/>
            <person name="Puehler A."/>
            <person name="Bonas U."/>
            <person name="Bartels D."/>
            <person name="Kaiser O."/>
        </authorList>
    </citation>
    <scope>NUCLEOTIDE SEQUENCE [LARGE SCALE GENOMIC DNA]</scope>
    <source>
        <strain>85-10</strain>
    </source>
</reference>
<sequence length="596" mass="65866">MRNIRNFSIIAHVDHGKSTLADRIIQLCGGLQAREMEAQVLDSNPIERERGITIKAQSVSLPYTAKDGQTYHLNFIDTPGHVDFSYEVSRSLAACEGALLVVDAAQGVEAQSVANCYTAVEQGLEVVPVLNKIDLPTADVDRAKAEIEAVIGIDAEDAVAVSAKTGLNIDLVLEAIVHRIPPPKPRETDKLQALIIDSWFDNYLGVVSLVRVMQGEIKPGSKILVMSTGRTHLVDKVGVFTPKRKELPALGAGEVGWINASIKDVHGAPVGDTLTLAGDPAPHALPGFQEMQPRVFAGLFPVDAEDYPDLREALDKLRLNDAALRFEPESSEAMGFGFRCGFLGMLHMEIVQERLEREYNLDLISTAPTVVYEVLKTDGTVINMDNPAKLPQLNLVQEIREPIIRANVLTPEEYIGNIIKLCEEKRGTQIGINYLGSQVQISYELPMAEVVLDFFDKLKSVSRGYASLDYHFVRFDAGPFVRVDVLINGDKVDALSLIVHRSHADRRGRELCEKMKDLIPRQMFDVAIQAAIGSQIISRSTVKAMRKNVLAKCYGGDVSRKKKLLEKQKEGKKRMKQVGRVEIPQEAFLAVLQMDK</sequence>
<proteinExistence type="inferred from homology"/>
<accession>Q3BVV9</accession>
<organism>
    <name type="scientific">Xanthomonas euvesicatoria pv. vesicatoria (strain 85-10)</name>
    <name type="common">Xanthomonas campestris pv. vesicatoria</name>
    <dbReference type="NCBI Taxonomy" id="316273"/>
    <lineage>
        <taxon>Bacteria</taxon>
        <taxon>Pseudomonadati</taxon>
        <taxon>Pseudomonadota</taxon>
        <taxon>Gammaproteobacteria</taxon>
        <taxon>Lysobacterales</taxon>
        <taxon>Lysobacteraceae</taxon>
        <taxon>Xanthomonas</taxon>
    </lineage>
</organism>
<dbReference type="EC" id="3.6.5.n1" evidence="1"/>
<dbReference type="EMBL" id="AM039952">
    <property type="protein sequence ID" value="CAJ23004.1"/>
    <property type="molecule type" value="Genomic_DNA"/>
</dbReference>
<dbReference type="RefSeq" id="WP_011346816.1">
    <property type="nucleotide sequence ID" value="NZ_CP017190.1"/>
</dbReference>
<dbReference type="SMR" id="Q3BVV9"/>
<dbReference type="STRING" id="456327.BJD11_15815"/>
<dbReference type="KEGG" id="xcv:XCV1373"/>
<dbReference type="eggNOG" id="COG0481">
    <property type="taxonomic scope" value="Bacteria"/>
</dbReference>
<dbReference type="HOGENOM" id="CLU_009995_3_3_6"/>
<dbReference type="Proteomes" id="UP000007069">
    <property type="component" value="Chromosome"/>
</dbReference>
<dbReference type="GO" id="GO:0005886">
    <property type="term" value="C:plasma membrane"/>
    <property type="evidence" value="ECO:0007669"/>
    <property type="project" value="UniProtKB-SubCell"/>
</dbReference>
<dbReference type="GO" id="GO:0005525">
    <property type="term" value="F:GTP binding"/>
    <property type="evidence" value="ECO:0007669"/>
    <property type="project" value="UniProtKB-UniRule"/>
</dbReference>
<dbReference type="GO" id="GO:0003924">
    <property type="term" value="F:GTPase activity"/>
    <property type="evidence" value="ECO:0007669"/>
    <property type="project" value="UniProtKB-UniRule"/>
</dbReference>
<dbReference type="GO" id="GO:0097216">
    <property type="term" value="F:guanosine tetraphosphate binding"/>
    <property type="evidence" value="ECO:0007669"/>
    <property type="project" value="UniProtKB-ARBA"/>
</dbReference>
<dbReference type="GO" id="GO:0043022">
    <property type="term" value="F:ribosome binding"/>
    <property type="evidence" value="ECO:0007669"/>
    <property type="project" value="UniProtKB-UniRule"/>
</dbReference>
<dbReference type="GO" id="GO:0003746">
    <property type="term" value="F:translation elongation factor activity"/>
    <property type="evidence" value="ECO:0007669"/>
    <property type="project" value="UniProtKB-UniRule"/>
</dbReference>
<dbReference type="GO" id="GO:0045727">
    <property type="term" value="P:positive regulation of translation"/>
    <property type="evidence" value="ECO:0007669"/>
    <property type="project" value="UniProtKB-UniRule"/>
</dbReference>
<dbReference type="CDD" id="cd03699">
    <property type="entry name" value="EF4_II"/>
    <property type="match status" value="1"/>
</dbReference>
<dbReference type="CDD" id="cd16260">
    <property type="entry name" value="EF4_III"/>
    <property type="match status" value="1"/>
</dbReference>
<dbReference type="CDD" id="cd01890">
    <property type="entry name" value="LepA"/>
    <property type="match status" value="1"/>
</dbReference>
<dbReference type="CDD" id="cd03709">
    <property type="entry name" value="lepA_C"/>
    <property type="match status" value="1"/>
</dbReference>
<dbReference type="FunFam" id="3.40.50.300:FF:000078">
    <property type="entry name" value="Elongation factor 4"/>
    <property type="match status" value="1"/>
</dbReference>
<dbReference type="FunFam" id="2.40.30.10:FF:000015">
    <property type="entry name" value="Translation factor GUF1, mitochondrial"/>
    <property type="match status" value="1"/>
</dbReference>
<dbReference type="FunFam" id="3.30.70.240:FF:000007">
    <property type="entry name" value="Translation factor GUF1, mitochondrial"/>
    <property type="match status" value="1"/>
</dbReference>
<dbReference type="FunFam" id="3.30.70.2570:FF:000001">
    <property type="entry name" value="Translation factor GUF1, mitochondrial"/>
    <property type="match status" value="1"/>
</dbReference>
<dbReference type="FunFam" id="3.30.70.870:FF:000004">
    <property type="entry name" value="Translation factor GUF1, mitochondrial"/>
    <property type="match status" value="1"/>
</dbReference>
<dbReference type="Gene3D" id="3.30.70.240">
    <property type="match status" value="1"/>
</dbReference>
<dbReference type="Gene3D" id="3.30.70.2570">
    <property type="entry name" value="Elongation factor 4, C-terminal domain"/>
    <property type="match status" value="1"/>
</dbReference>
<dbReference type="Gene3D" id="3.30.70.870">
    <property type="entry name" value="Elongation Factor G (Translational Gtpase), domain 3"/>
    <property type="match status" value="1"/>
</dbReference>
<dbReference type="Gene3D" id="3.40.50.300">
    <property type="entry name" value="P-loop containing nucleotide triphosphate hydrolases"/>
    <property type="match status" value="1"/>
</dbReference>
<dbReference type="Gene3D" id="2.40.30.10">
    <property type="entry name" value="Translation factors"/>
    <property type="match status" value="1"/>
</dbReference>
<dbReference type="HAMAP" id="MF_00071">
    <property type="entry name" value="LepA"/>
    <property type="match status" value="1"/>
</dbReference>
<dbReference type="InterPro" id="IPR006297">
    <property type="entry name" value="EF-4"/>
</dbReference>
<dbReference type="InterPro" id="IPR035647">
    <property type="entry name" value="EFG_III/V"/>
</dbReference>
<dbReference type="InterPro" id="IPR000640">
    <property type="entry name" value="EFG_V-like"/>
</dbReference>
<dbReference type="InterPro" id="IPR004161">
    <property type="entry name" value="EFTu-like_2"/>
</dbReference>
<dbReference type="InterPro" id="IPR031157">
    <property type="entry name" value="G_TR_CS"/>
</dbReference>
<dbReference type="InterPro" id="IPR038363">
    <property type="entry name" value="LepA_C_sf"/>
</dbReference>
<dbReference type="InterPro" id="IPR013842">
    <property type="entry name" value="LepA_CTD"/>
</dbReference>
<dbReference type="InterPro" id="IPR035654">
    <property type="entry name" value="LepA_IV"/>
</dbReference>
<dbReference type="InterPro" id="IPR027417">
    <property type="entry name" value="P-loop_NTPase"/>
</dbReference>
<dbReference type="InterPro" id="IPR005225">
    <property type="entry name" value="Small_GTP-bd"/>
</dbReference>
<dbReference type="InterPro" id="IPR000795">
    <property type="entry name" value="T_Tr_GTP-bd_dom"/>
</dbReference>
<dbReference type="NCBIfam" id="TIGR01393">
    <property type="entry name" value="lepA"/>
    <property type="match status" value="1"/>
</dbReference>
<dbReference type="NCBIfam" id="TIGR00231">
    <property type="entry name" value="small_GTP"/>
    <property type="match status" value="1"/>
</dbReference>
<dbReference type="PANTHER" id="PTHR43512:SF4">
    <property type="entry name" value="TRANSLATION FACTOR GUF1 HOMOLOG, CHLOROPLASTIC"/>
    <property type="match status" value="1"/>
</dbReference>
<dbReference type="PANTHER" id="PTHR43512">
    <property type="entry name" value="TRANSLATION FACTOR GUF1-RELATED"/>
    <property type="match status" value="1"/>
</dbReference>
<dbReference type="Pfam" id="PF00679">
    <property type="entry name" value="EFG_C"/>
    <property type="match status" value="1"/>
</dbReference>
<dbReference type="Pfam" id="PF00009">
    <property type="entry name" value="GTP_EFTU"/>
    <property type="match status" value="1"/>
</dbReference>
<dbReference type="Pfam" id="PF03144">
    <property type="entry name" value="GTP_EFTU_D2"/>
    <property type="match status" value="1"/>
</dbReference>
<dbReference type="Pfam" id="PF06421">
    <property type="entry name" value="LepA_C"/>
    <property type="match status" value="1"/>
</dbReference>
<dbReference type="PRINTS" id="PR00315">
    <property type="entry name" value="ELONGATNFCT"/>
</dbReference>
<dbReference type="SMART" id="SM00838">
    <property type="entry name" value="EFG_C"/>
    <property type="match status" value="1"/>
</dbReference>
<dbReference type="SUPFAM" id="SSF54980">
    <property type="entry name" value="EF-G C-terminal domain-like"/>
    <property type="match status" value="2"/>
</dbReference>
<dbReference type="SUPFAM" id="SSF52540">
    <property type="entry name" value="P-loop containing nucleoside triphosphate hydrolases"/>
    <property type="match status" value="1"/>
</dbReference>
<dbReference type="PROSITE" id="PS00301">
    <property type="entry name" value="G_TR_1"/>
    <property type="match status" value="1"/>
</dbReference>
<dbReference type="PROSITE" id="PS51722">
    <property type="entry name" value="G_TR_2"/>
    <property type="match status" value="1"/>
</dbReference>
<protein>
    <recommendedName>
        <fullName evidence="1">Elongation factor 4</fullName>
        <shortName evidence="1">EF-4</shortName>
        <ecNumber evidence="1">3.6.5.n1</ecNumber>
    </recommendedName>
    <alternativeName>
        <fullName evidence="1">Ribosomal back-translocase LepA</fullName>
    </alternativeName>
</protein>
<feature type="chain" id="PRO_0000224811" description="Elongation factor 4">
    <location>
        <begin position="1"/>
        <end position="596"/>
    </location>
</feature>
<feature type="domain" description="tr-type G">
    <location>
        <begin position="2"/>
        <end position="184"/>
    </location>
</feature>
<feature type="binding site" evidence="1">
    <location>
        <begin position="14"/>
        <end position="19"/>
    </location>
    <ligand>
        <name>GTP</name>
        <dbReference type="ChEBI" id="CHEBI:37565"/>
    </ligand>
</feature>
<feature type="binding site" evidence="1">
    <location>
        <begin position="131"/>
        <end position="134"/>
    </location>
    <ligand>
        <name>GTP</name>
        <dbReference type="ChEBI" id="CHEBI:37565"/>
    </ligand>
</feature>
<gene>
    <name evidence="1" type="primary">lepA</name>
    <name type="ordered locus">XCV1373</name>
</gene>